<feature type="chain" id="PRO_0000257217" description="UDP-N-acetylmuramoylalanine--D-glutamate ligase">
    <location>
        <begin position="1"/>
        <end position="448"/>
    </location>
</feature>
<feature type="binding site" evidence="1">
    <location>
        <begin position="116"/>
        <end position="122"/>
    </location>
    <ligand>
        <name>ATP</name>
        <dbReference type="ChEBI" id="CHEBI:30616"/>
    </ligand>
</feature>
<reference key="1">
    <citation type="journal article" date="2009" name="Genome Biol.">
        <title>Genomic and genetic analyses of diversity and plant interactions of Pseudomonas fluorescens.</title>
        <authorList>
            <person name="Silby M.W."/>
            <person name="Cerdeno-Tarraga A.M."/>
            <person name="Vernikos G.S."/>
            <person name="Giddens S.R."/>
            <person name="Jackson R.W."/>
            <person name="Preston G.M."/>
            <person name="Zhang X.-X."/>
            <person name="Moon C.D."/>
            <person name="Gehrig S.M."/>
            <person name="Godfrey S.A.C."/>
            <person name="Knight C.G."/>
            <person name="Malone J.G."/>
            <person name="Robinson Z."/>
            <person name="Spiers A.J."/>
            <person name="Harris S."/>
            <person name="Challis G.L."/>
            <person name="Yaxley A.M."/>
            <person name="Harris D."/>
            <person name="Seeger K."/>
            <person name="Murphy L."/>
            <person name="Rutter S."/>
            <person name="Squares R."/>
            <person name="Quail M.A."/>
            <person name="Saunders E."/>
            <person name="Mavromatis K."/>
            <person name="Brettin T.S."/>
            <person name="Bentley S.D."/>
            <person name="Hothersall J."/>
            <person name="Stephens E."/>
            <person name="Thomas C.M."/>
            <person name="Parkhill J."/>
            <person name="Levy S.B."/>
            <person name="Rainey P.B."/>
            <person name="Thomson N.R."/>
        </authorList>
    </citation>
    <scope>NUCLEOTIDE SEQUENCE [LARGE SCALE GENOMIC DNA]</scope>
    <source>
        <strain>Pf0-1</strain>
    </source>
</reference>
<organism>
    <name type="scientific">Pseudomonas fluorescens (strain Pf0-1)</name>
    <dbReference type="NCBI Taxonomy" id="205922"/>
    <lineage>
        <taxon>Bacteria</taxon>
        <taxon>Pseudomonadati</taxon>
        <taxon>Pseudomonadota</taxon>
        <taxon>Gammaproteobacteria</taxon>
        <taxon>Pseudomonadales</taxon>
        <taxon>Pseudomonadaceae</taxon>
        <taxon>Pseudomonas</taxon>
    </lineage>
</organism>
<accession>Q3K742</accession>
<protein>
    <recommendedName>
        <fullName evidence="1">UDP-N-acetylmuramoylalanine--D-glutamate ligase</fullName>
        <ecNumber evidence="1">6.3.2.9</ecNumber>
    </recommendedName>
    <alternativeName>
        <fullName evidence="1">D-glutamic acid-adding enzyme</fullName>
    </alternativeName>
    <alternativeName>
        <fullName evidence="1">UDP-N-acetylmuramoyl-L-alanyl-D-glutamate synthetase</fullName>
    </alternativeName>
</protein>
<name>MURD_PSEPF</name>
<dbReference type="EC" id="6.3.2.9" evidence="1"/>
<dbReference type="EMBL" id="CP000094">
    <property type="protein sequence ID" value="ABA76412.1"/>
    <property type="molecule type" value="Genomic_DNA"/>
</dbReference>
<dbReference type="RefSeq" id="WP_011335864.1">
    <property type="nucleotide sequence ID" value="NC_007492.2"/>
</dbReference>
<dbReference type="SMR" id="Q3K742"/>
<dbReference type="KEGG" id="pfo:Pfl01_4675"/>
<dbReference type="eggNOG" id="COG0771">
    <property type="taxonomic scope" value="Bacteria"/>
</dbReference>
<dbReference type="HOGENOM" id="CLU_032540_1_0_6"/>
<dbReference type="UniPathway" id="UPA00219"/>
<dbReference type="Proteomes" id="UP000002704">
    <property type="component" value="Chromosome"/>
</dbReference>
<dbReference type="GO" id="GO:0005737">
    <property type="term" value="C:cytoplasm"/>
    <property type="evidence" value="ECO:0007669"/>
    <property type="project" value="UniProtKB-SubCell"/>
</dbReference>
<dbReference type="GO" id="GO:0005524">
    <property type="term" value="F:ATP binding"/>
    <property type="evidence" value="ECO:0007669"/>
    <property type="project" value="UniProtKB-UniRule"/>
</dbReference>
<dbReference type="GO" id="GO:0008764">
    <property type="term" value="F:UDP-N-acetylmuramoylalanine-D-glutamate ligase activity"/>
    <property type="evidence" value="ECO:0007669"/>
    <property type="project" value="UniProtKB-UniRule"/>
</dbReference>
<dbReference type="GO" id="GO:0051301">
    <property type="term" value="P:cell division"/>
    <property type="evidence" value="ECO:0007669"/>
    <property type="project" value="UniProtKB-KW"/>
</dbReference>
<dbReference type="GO" id="GO:0071555">
    <property type="term" value="P:cell wall organization"/>
    <property type="evidence" value="ECO:0007669"/>
    <property type="project" value="UniProtKB-KW"/>
</dbReference>
<dbReference type="GO" id="GO:0009252">
    <property type="term" value="P:peptidoglycan biosynthetic process"/>
    <property type="evidence" value="ECO:0007669"/>
    <property type="project" value="UniProtKB-UniRule"/>
</dbReference>
<dbReference type="GO" id="GO:0008360">
    <property type="term" value="P:regulation of cell shape"/>
    <property type="evidence" value="ECO:0007669"/>
    <property type="project" value="UniProtKB-KW"/>
</dbReference>
<dbReference type="Gene3D" id="3.90.190.20">
    <property type="entry name" value="Mur ligase, C-terminal domain"/>
    <property type="match status" value="1"/>
</dbReference>
<dbReference type="Gene3D" id="3.40.1190.10">
    <property type="entry name" value="Mur-like, catalytic domain"/>
    <property type="match status" value="1"/>
</dbReference>
<dbReference type="Gene3D" id="3.40.50.720">
    <property type="entry name" value="NAD(P)-binding Rossmann-like Domain"/>
    <property type="match status" value="1"/>
</dbReference>
<dbReference type="HAMAP" id="MF_00639">
    <property type="entry name" value="MurD"/>
    <property type="match status" value="1"/>
</dbReference>
<dbReference type="InterPro" id="IPR036565">
    <property type="entry name" value="Mur-like_cat_sf"/>
</dbReference>
<dbReference type="InterPro" id="IPR004101">
    <property type="entry name" value="Mur_ligase_C"/>
</dbReference>
<dbReference type="InterPro" id="IPR036615">
    <property type="entry name" value="Mur_ligase_C_dom_sf"/>
</dbReference>
<dbReference type="InterPro" id="IPR013221">
    <property type="entry name" value="Mur_ligase_cen"/>
</dbReference>
<dbReference type="InterPro" id="IPR005762">
    <property type="entry name" value="MurD"/>
</dbReference>
<dbReference type="NCBIfam" id="TIGR01087">
    <property type="entry name" value="murD"/>
    <property type="match status" value="1"/>
</dbReference>
<dbReference type="PANTHER" id="PTHR43692">
    <property type="entry name" value="UDP-N-ACETYLMURAMOYLALANINE--D-GLUTAMATE LIGASE"/>
    <property type="match status" value="1"/>
</dbReference>
<dbReference type="PANTHER" id="PTHR43692:SF1">
    <property type="entry name" value="UDP-N-ACETYLMURAMOYLALANINE--D-GLUTAMATE LIGASE"/>
    <property type="match status" value="1"/>
</dbReference>
<dbReference type="Pfam" id="PF02875">
    <property type="entry name" value="Mur_ligase_C"/>
    <property type="match status" value="1"/>
</dbReference>
<dbReference type="Pfam" id="PF08245">
    <property type="entry name" value="Mur_ligase_M"/>
    <property type="match status" value="1"/>
</dbReference>
<dbReference type="Pfam" id="PF21799">
    <property type="entry name" value="MurD-like_N"/>
    <property type="match status" value="1"/>
</dbReference>
<dbReference type="SUPFAM" id="SSF51984">
    <property type="entry name" value="MurCD N-terminal domain"/>
    <property type="match status" value="1"/>
</dbReference>
<dbReference type="SUPFAM" id="SSF53623">
    <property type="entry name" value="MurD-like peptide ligases, catalytic domain"/>
    <property type="match status" value="1"/>
</dbReference>
<dbReference type="SUPFAM" id="SSF53244">
    <property type="entry name" value="MurD-like peptide ligases, peptide-binding domain"/>
    <property type="match status" value="1"/>
</dbReference>
<evidence type="ECO:0000255" key="1">
    <source>
        <dbReference type="HAMAP-Rule" id="MF_00639"/>
    </source>
</evidence>
<proteinExistence type="inferred from homology"/>
<keyword id="KW-0067">ATP-binding</keyword>
<keyword id="KW-0131">Cell cycle</keyword>
<keyword id="KW-0132">Cell division</keyword>
<keyword id="KW-0133">Cell shape</keyword>
<keyword id="KW-0961">Cell wall biogenesis/degradation</keyword>
<keyword id="KW-0963">Cytoplasm</keyword>
<keyword id="KW-0436">Ligase</keyword>
<keyword id="KW-0547">Nucleotide-binding</keyword>
<keyword id="KW-0573">Peptidoglycan synthesis</keyword>
<comment type="function">
    <text evidence="1">Cell wall formation. Catalyzes the addition of glutamate to the nucleotide precursor UDP-N-acetylmuramoyl-L-alanine (UMA).</text>
</comment>
<comment type="catalytic activity">
    <reaction evidence="1">
        <text>UDP-N-acetyl-alpha-D-muramoyl-L-alanine + D-glutamate + ATP = UDP-N-acetyl-alpha-D-muramoyl-L-alanyl-D-glutamate + ADP + phosphate + H(+)</text>
        <dbReference type="Rhea" id="RHEA:16429"/>
        <dbReference type="ChEBI" id="CHEBI:15378"/>
        <dbReference type="ChEBI" id="CHEBI:29986"/>
        <dbReference type="ChEBI" id="CHEBI:30616"/>
        <dbReference type="ChEBI" id="CHEBI:43474"/>
        <dbReference type="ChEBI" id="CHEBI:83898"/>
        <dbReference type="ChEBI" id="CHEBI:83900"/>
        <dbReference type="ChEBI" id="CHEBI:456216"/>
        <dbReference type="EC" id="6.3.2.9"/>
    </reaction>
</comment>
<comment type="pathway">
    <text evidence="1">Cell wall biogenesis; peptidoglycan biosynthesis.</text>
</comment>
<comment type="subcellular location">
    <subcellularLocation>
        <location evidence="1">Cytoplasm</location>
    </subcellularLocation>
</comment>
<comment type="similarity">
    <text evidence="1">Belongs to the MurCDEF family.</text>
</comment>
<sequence length="448" mass="47950">MSLIASDHFRIVVGLGKSGMSLVRFLANRGVAFAVADTRENPPELATLQRDYPHVEVRCGELDVEFLCRADELYVSPGLALATPALQAAAARGVKLSGDIELFARNAKAPIVAISGSNAKSTVTTLVGEMAAAAGKRVAVGGNLGTPALDLLSDDVELYVMELSSFQLETTDQLNAEVATVLNISEDHMDRYSGLPAYHLAKHRIFRGAKQFVVNRQDALTRPLMGEGQPCWTFGLSKPDFKAFGLREENGEKYLAFEFQNLMPVRELKIRGAHNQSNALAALALGHAVGLPFDAMLVALRTFAGLEHRCQWVRDLDGVGYYNDSKATNVGAALAAIEGLGADIDGKVVLIAGGDGKGAEFKDLRDPVATHCRAVILMGRDSDKIGEAIGDAVPLIRATTLVDAVAQCRAAAQPGDVVLLSPACASFDMFNNYEDRGHQFVRAVEDLA</sequence>
<gene>
    <name evidence="1" type="primary">murD</name>
    <name type="ordered locus">Pfl01_4675</name>
</gene>